<feature type="signal peptide" evidence="1">
    <location>
        <begin position="1"/>
        <end position="27"/>
    </location>
</feature>
<feature type="chain" id="PRO_0000034464" description="Lymphotoxin-alpha">
    <location>
        <begin position="28"/>
        <end position="201"/>
    </location>
</feature>
<feature type="domain" description="THD" evidence="4">
    <location>
        <begin position="60"/>
        <end position="201"/>
    </location>
</feature>
<feature type="region of interest" description="Disordered" evidence="5">
    <location>
        <begin position="23"/>
        <end position="52"/>
    </location>
</feature>
<feature type="compositionally biased region" description="Polar residues" evidence="5">
    <location>
        <begin position="31"/>
        <end position="51"/>
    </location>
</feature>
<feature type="glycosylation site" description="N-linked (GlcNAc...) asparagine" evidence="3">
    <location>
        <position position="93"/>
    </location>
</feature>
<feature type="disulfide bond" evidence="4">
    <location>
        <begin position="117"/>
        <end position="152"/>
    </location>
</feature>
<name>TNFB_NOTEU</name>
<dbReference type="EMBL" id="AF119336">
    <property type="protein sequence ID" value="AAD41773.1"/>
    <property type="molecule type" value="mRNA"/>
</dbReference>
<dbReference type="EMBL" id="AY853666">
    <property type="protein sequence ID" value="AAZ99794.1"/>
    <property type="molecule type" value="Genomic_DNA"/>
</dbReference>
<dbReference type="SMR" id="Q9XT48"/>
<dbReference type="GlyCosmos" id="Q9XT48">
    <property type="glycosylation" value="1 site, No reported glycans"/>
</dbReference>
<dbReference type="HOGENOM" id="CLU_070352_4_0_1"/>
<dbReference type="OMA" id="RSACQNV"/>
<dbReference type="TreeFam" id="TF332169"/>
<dbReference type="GO" id="GO:0005615">
    <property type="term" value="C:extracellular space"/>
    <property type="evidence" value="ECO:0007669"/>
    <property type="project" value="UniProtKB-KW"/>
</dbReference>
<dbReference type="GO" id="GO:0016020">
    <property type="term" value="C:membrane"/>
    <property type="evidence" value="ECO:0007669"/>
    <property type="project" value="UniProtKB-SubCell"/>
</dbReference>
<dbReference type="GO" id="GO:0005125">
    <property type="term" value="F:cytokine activity"/>
    <property type="evidence" value="ECO:0007669"/>
    <property type="project" value="UniProtKB-KW"/>
</dbReference>
<dbReference type="GO" id="GO:0005164">
    <property type="term" value="F:tumor necrosis factor receptor binding"/>
    <property type="evidence" value="ECO:0007669"/>
    <property type="project" value="InterPro"/>
</dbReference>
<dbReference type="GO" id="GO:0050830">
    <property type="term" value="P:defense response to Gram-positive bacterium"/>
    <property type="evidence" value="ECO:0007669"/>
    <property type="project" value="Ensembl"/>
</dbReference>
<dbReference type="GO" id="GO:0006959">
    <property type="term" value="P:humoral immune response"/>
    <property type="evidence" value="ECO:0007669"/>
    <property type="project" value="Ensembl"/>
</dbReference>
<dbReference type="GO" id="GO:0048535">
    <property type="term" value="P:lymph node development"/>
    <property type="evidence" value="ECO:0007669"/>
    <property type="project" value="Ensembl"/>
</dbReference>
<dbReference type="GO" id="GO:0043123">
    <property type="term" value="P:positive regulation of canonical NF-kappaB signal transduction"/>
    <property type="evidence" value="ECO:0007669"/>
    <property type="project" value="TreeGrafter"/>
</dbReference>
<dbReference type="GO" id="GO:0002876">
    <property type="term" value="P:positive regulation of chronic inflammatory response to antigenic stimulus"/>
    <property type="evidence" value="ECO:0007669"/>
    <property type="project" value="Ensembl"/>
</dbReference>
<dbReference type="GO" id="GO:2001238">
    <property type="term" value="P:positive regulation of extrinsic apoptotic signaling pathway"/>
    <property type="evidence" value="ECO:0007669"/>
    <property type="project" value="TreeGrafter"/>
</dbReference>
<dbReference type="GO" id="GO:0002925">
    <property type="term" value="P:positive regulation of humoral immune response mediated by circulating immunoglobulin"/>
    <property type="evidence" value="ECO:0007669"/>
    <property type="project" value="Ensembl"/>
</dbReference>
<dbReference type="GO" id="GO:0032729">
    <property type="term" value="P:positive regulation of type II interferon production"/>
    <property type="evidence" value="ECO:0007669"/>
    <property type="project" value="Ensembl"/>
</dbReference>
<dbReference type="CDD" id="cd00184">
    <property type="entry name" value="TNF"/>
    <property type="match status" value="1"/>
</dbReference>
<dbReference type="FunFam" id="2.60.120.40:FF:000016">
    <property type="entry name" value="Tumor necrosis factor"/>
    <property type="match status" value="1"/>
</dbReference>
<dbReference type="Gene3D" id="2.60.120.40">
    <property type="match status" value="1"/>
</dbReference>
<dbReference type="InterPro" id="IPR006053">
    <property type="entry name" value="TNF"/>
</dbReference>
<dbReference type="InterPro" id="IPR002960">
    <property type="entry name" value="TNF_beta"/>
</dbReference>
<dbReference type="InterPro" id="IPR021184">
    <property type="entry name" value="TNF_CS"/>
</dbReference>
<dbReference type="InterPro" id="IPR006052">
    <property type="entry name" value="TNF_dom"/>
</dbReference>
<dbReference type="InterPro" id="IPR008983">
    <property type="entry name" value="Tumour_necrosis_fac-like_dom"/>
</dbReference>
<dbReference type="PANTHER" id="PTHR11471:SF31">
    <property type="entry name" value="LYMPHOTOXIN-ALPHA"/>
    <property type="match status" value="1"/>
</dbReference>
<dbReference type="PANTHER" id="PTHR11471">
    <property type="entry name" value="TUMOR NECROSIS FACTOR FAMILY MEMBER"/>
    <property type="match status" value="1"/>
</dbReference>
<dbReference type="Pfam" id="PF00229">
    <property type="entry name" value="TNF"/>
    <property type="match status" value="1"/>
</dbReference>
<dbReference type="PRINTS" id="PR01234">
    <property type="entry name" value="TNECROSISFCT"/>
</dbReference>
<dbReference type="PRINTS" id="PR01236">
    <property type="entry name" value="TNFBETA"/>
</dbReference>
<dbReference type="SMART" id="SM00207">
    <property type="entry name" value="TNF"/>
    <property type="match status" value="1"/>
</dbReference>
<dbReference type="SUPFAM" id="SSF49842">
    <property type="entry name" value="TNF-like"/>
    <property type="match status" value="1"/>
</dbReference>
<dbReference type="PROSITE" id="PS00251">
    <property type="entry name" value="THD_1"/>
    <property type="match status" value="1"/>
</dbReference>
<dbReference type="PROSITE" id="PS50049">
    <property type="entry name" value="THD_2"/>
    <property type="match status" value="1"/>
</dbReference>
<comment type="function">
    <text evidence="2">Cytokine that in its homotrimeric form binds to TNFRSF1A/TNFR1, TNFRSF1B/TNFBR and TNFRSF14/HVEM (By similarity). In its heterotrimeric form with LTB binds to TNFRSF3/LTBR. Lymphotoxin is produced by lymphocytes and is cytotoxic for a wide range of tumor cells in vitro and in vivo.</text>
</comment>
<comment type="subunit">
    <text evidence="2">Homotrimer, and heterotrimer of either two LTB and one LTA subunits or (less prevalent) two LTA and one LTB subunits. Interacts with TNFRSF14.</text>
</comment>
<comment type="subcellular location">
    <subcellularLocation>
        <location evidence="1">Secreted</location>
    </subcellularLocation>
    <subcellularLocation>
        <location evidence="1">Membrane</location>
    </subcellularLocation>
    <text evidence="1">The homotrimer is secreted. The heterotrimer is membrane-associated.</text>
</comment>
<comment type="similarity">
    <text evidence="6">Belongs to the tumor necrosis factor family.</text>
</comment>
<gene>
    <name type="primary">LTA</name>
    <name type="synonym">TNFB</name>
    <name type="synonym">TNFSF1</name>
</gene>
<protein>
    <recommendedName>
        <fullName>Lymphotoxin-alpha</fullName>
        <shortName>LT-alpha</shortName>
    </recommendedName>
    <alternativeName>
        <fullName>TNF-beta</fullName>
    </alternativeName>
    <alternativeName>
        <fullName>Tumor necrosis factor ligand superfamily member 1</fullName>
    </alternativeName>
</protein>
<organism>
    <name type="scientific">Notamacropus eugenii</name>
    <name type="common">Tammar wallaby</name>
    <name type="synonym">Macropus eugenii</name>
    <dbReference type="NCBI Taxonomy" id="9315"/>
    <lineage>
        <taxon>Eukaryota</taxon>
        <taxon>Metazoa</taxon>
        <taxon>Chordata</taxon>
        <taxon>Craniata</taxon>
        <taxon>Vertebrata</taxon>
        <taxon>Euteleostomi</taxon>
        <taxon>Mammalia</taxon>
        <taxon>Metatheria</taxon>
        <taxon>Diprotodontia</taxon>
        <taxon>Macropodidae</taxon>
        <taxon>Notamacropus</taxon>
    </lineage>
</organism>
<keyword id="KW-0202">Cytokine</keyword>
<keyword id="KW-1015">Disulfide bond</keyword>
<keyword id="KW-0325">Glycoprotein</keyword>
<keyword id="KW-0472">Membrane</keyword>
<keyword id="KW-0964">Secreted</keyword>
<keyword id="KW-0732">Signal</keyword>
<reference key="1">
    <citation type="journal article" date="2000" name="DNA Seq.">
        <title>cDNA cloning of lymphotoxin alpha (LT-alpha) from a marsupial, Macropus eugenii.</title>
        <authorList>
            <person name="Harrison G.A."/>
            <person name="Deane E.M."/>
        </authorList>
    </citation>
    <scope>NUCLEOTIDE SEQUENCE [MRNA]</scope>
</reference>
<reference key="2">
    <citation type="journal article" date="2005" name="Cytogenet. Genome Res.">
        <title>Analysis of the genomic region containing the tammar wallaby (Macropus eugenii) orthologues of MHC class III genes.</title>
        <authorList>
            <person name="Cross J.G."/>
            <person name="Harrison G.A."/>
            <person name="Coggill P."/>
            <person name="Sims S."/>
            <person name="Beck S."/>
            <person name="Deakin J.E."/>
            <person name="Graves J.A."/>
        </authorList>
    </citation>
    <scope>NUCLEOTIDE SEQUENCE [GENOMIC DNA]</scope>
</reference>
<sequence length="201" mass="21536">MTSSGVLCLLGALSLQVLLLQPPGAQGAPNPDNSHSSSPAPPQTAQHLSQKSLKRETLKPAAHLVGDPSVQDSIHWRANTDHAFLRHGFSLSNNSLLVPTSGLYFVYSQVVFSGASCSEITPTLLYLSHEVLLFSSKYQVHVPLLSAQKSVCSGTQGPWMRSVYQGAVFLLTQGDRLSTYTDGVSHLLQSPSSVFFGAFAL</sequence>
<evidence type="ECO:0000250" key="1"/>
<evidence type="ECO:0000250" key="2">
    <source>
        <dbReference type="UniProtKB" id="P01374"/>
    </source>
</evidence>
<evidence type="ECO:0000255" key="3"/>
<evidence type="ECO:0000255" key="4">
    <source>
        <dbReference type="PROSITE-ProRule" id="PRU01387"/>
    </source>
</evidence>
<evidence type="ECO:0000256" key="5">
    <source>
        <dbReference type="SAM" id="MobiDB-lite"/>
    </source>
</evidence>
<evidence type="ECO:0000305" key="6"/>
<proteinExistence type="evidence at transcript level"/>
<accession>Q9XT48</accession>
<accession>Q3T4H4</accession>